<accession>P0DJC8</accession>
<feature type="chain" id="PRO_0000415317" description="Snaclec aspercetin subunit alpha">
    <location>
        <begin position="1"/>
        <end position="62" status="greater than"/>
    </location>
</feature>
<feature type="domain" description="C-type lectin" evidence="1">
    <location>
        <begin position="9"/>
        <end position="62" status="greater than"/>
    </location>
</feature>
<feature type="disulfide bond" evidence="1">
    <location>
        <begin position="2"/>
        <end position="13"/>
    </location>
</feature>
<feature type="disulfide bond" evidence="1">
    <location>
        <begin position="30"/>
        <end status="unknown"/>
    </location>
</feature>
<feature type="unsure residue" description="Assigned by comparison with orthologs">
    <location>
        <position position="2"/>
    </location>
</feature>
<feature type="unsure residue" description="Assigned by comparison with orthologs">
    <location>
        <position position="30"/>
    </location>
</feature>
<feature type="non-terminal residue">
    <location>
        <position position="62"/>
    </location>
</feature>
<comment type="function">
    <text evidence="2">Snaclec that binds to von Willebrand factor (VWF) and induces its interaction with GPIbalpha (GP1BA) (via the vWF A1 domain), resulting in platelet aggregation. Intravenous injection in mice induces a dose-dependent drop in platelet count (thrombocytopenia). Pretreatment by intravenous injection by this protein in mice potentiates the hemorrhagic lesion in the skin provoked by the metalloproteinase BaP1 intradermally injected. This result is not observed when both BaP1 and this protein are injected simultaneously.</text>
</comment>
<comment type="subunit">
    <text evidence="2">Heterodimer; disulfide-linked.</text>
</comment>
<comment type="subcellular location">
    <subcellularLocation>
        <location evidence="2">Secreted</location>
    </subcellularLocation>
</comment>
<comment type="tissue specificity">
    <text>Expressed by the venom gland.</text>
</comment>
<comment type="similarity">
    <text evidence="3">Belongs to the snaclec family.</text>
</comment>
<keyword id="KW-0903">Direct protein sequencing</keyword>
<keyword id="KW-1015">Disulfide bond</keyword>
<keyword id="KW-1199">Hemostasis impairing toxin</keyword>
<keyword id="KW-1202">Platelet aggregation activating toxin</keyword>
<keyword id="KW-0964">Secreted</keyword>
<keyword id="KW-0800">Toxin</keyword>
<proteinExistence type="evidence at protein level"/>
<evidence type="ECO:0000255" key="1">
    <source>
        <dbReference type="PROSITE-ProRule" id="PRU00040"/>
    </source>
</evidence>
<evidence type="ECO:0000269" key="2">
    <source>
    </source>
</evidence>
<evidence type="ECO:0000305" key="3"/>
<reference key="1">
    <citation type="journal article" date="2001" name="Thromb. Haemost.">
        <title>Characterization of aspercetin, a platelet aggregating component from the venom of the snake Bothrops asper which induces thrombocytopenia and potentiates metalloproteinase-induced hemorrhage.</title>
        <authorList>
            <person name="Rucavado A."/>
            <person name="Soto M."/>
            <person name="Kamiguti A.S."/>
            <person name="Theakston R.D."/>
            <person name="Fox J.W."/>
            <person name="Escalante T."/>
            <person name="Gutierrez J.M."/>
        </authorList>
    </citation>
    <scope>PROTEIN SEQUENCE</scope>
    <scope>FUNCTION</scope>
    <scope>SUBUNIT</scope>
    <scope>SUBCELLULAR LOCATION</scope>
    <scope>IDENTIFICATION BY MASS SPECTROMETRY</scope>
    <source>
        <tissue>Venom</tissue>
    </source>
</reference>
<sequence>DCPSGWSSYEGHCYRFFHPPKDWADAERFCTEQAKGGALVSIQRFGEEDFVSNLITKNLQRG</sequence>
<protein>
    <recommendedName>
        <fullName>Snaclec aspercetin subunit alpha</fullName>
    </recommendedName>
</protein>
<dbReference type="SMR" id="P0DJC8"/>
<dbReference type="GO" id="GO:0005576">
    <property type="term" value="C:extracellular region"/>
    <property type="evidence" value="ECO:0007669"/>
    <property type="project" value="UniProtKB-SubCell"/>
</dbReference>
<dbReference type="GO" id="GO:0090729">
    <property type="term" value="F:toxin activity"/>
    <property type="evidence" value="ECO:0007669"/>
    <property type="project" value="UniProtKB-KW"/>
</dbReference>
<dbReference type="Gene3D" id="3.10.100.10">
    <property type="entry name" value="Mannose-Binding Protein A, subunit A"/>
    <property type="match status" value="1"/>
</dbReference>
<dbReference type="InterPro" id="IPR001304">
    <property type="entry name" value="C-type_lectin-like"/>
</dbReference>
<dbReference type="InterPro" id="IPR016186">
    <property type="entry name" value="C-type_lectin-like/link_sf"/>
</dbReference>
<dbReference type="InterPro" id="IPR050111">
    <property type="entry name" value="C-type_lectin/snaclec_domain"/>
</dbReference>
<dbReference type="InterPro" id="IPR016187">
    <property type="entry name" value="CTDL_fold"/>
</dbReference>
<dbReference type="PANTHER" id="PTHR22803">
    <property type="entry name" value="MANNOSE, PHOSPHOLIPASE, LECTIN RECEPTOR RELATED"/>
    <property type="match status" value="1"/>
</dbReference>
<dbReference type="SUPFAM" id="SSF56436">
    <property type="entry name" value="C-type lectin-like"/>
    <property type="match status" value="1"/>
</dbReference>
<dbReference type="PROSITE" id="PS50041">
    <property type="entry name" value="C_TYPE_LECTIN_2"/>
    <property type="match status" value="1"/>
</dbReference>
<organism>
    <name type="scientific">Bothrops asper</name>
    <name type="common">Terciopelo</name>
    <dbReference type="NCBI Taxonomy" id="8722"/>
    <lineage>
        <taxon>Eukaryota</taxon>
        <taxon>Metazoa</taxon>
        <taxon>Chordata</taxon>
        <taxon>Craniata</taxon>
        <taxon>Vertebrata</taxon>
        <taxon>Euteleostomi</taxon>
        <taxon>Lepidosauria</taxon>
        <taxon>Squamata</taxon>
        <taxon>Bifurcata</taxon>
        <taxon>Unidentata</taxon>
        <taxon>Episquamata</taxon>
        <taxon>Toxicofera</taxon>
        <taxon>Serpentes</taxon>
        <taxon>Colubroidea</taxon>
        <taxon>Viperidae</taxon>
        <taxon>Crotalinae</taxon>
        <taxon>Bothrops</taxon>
    </lineage>
</organism>
<name>SLA_BOTAS</name>